<feature type="chain" id="PRO_1000007976" description="Sugar fermentation stimulation protein homolog">
    <location>
        <begin position="1"/>
        <end position="229"/>
    </location>
</feature>
<evidence type="ECO:0000255" key="1">
    <source>
        <dbReference type="HAMAP-Rule" id="MF_00095"/>
    </source>
</evidence>
<organism>
    <name type="scientific">Clostridium novyi (strain NT)</name>
    <dbReference type="NCBI Taxonomy" id="386415"/>
    <lineage>
        <taxon>Bacteria</taxon>
        <taxon>Bacillati</taxon>
        <taxon>Bacillota</taxon>
        <taxon>Clostridia</taxon>
        <taxon>Eubacteriales</taxon>
        <taxon>Clostridiaceae</taxon>
        <taxon>Clostridium</taxon>
    </lineage>
</organism>
<sequence length="229" mass="26280">MKINNVLTAKFIKRPNRFVAYVYLNNEEVKVHVPNTGRCREILIPDTTVVLREGTNPNRKTKYDLIAAYKNDKLINIDSQVPNAVVEEALKNKKIQPLVKFNNIKREQTFGNSRFDFKLWDDSNNKYYLEVKGVTLEDKGNCMFPDAPTERGTKHILELIEIKESHMGAGILFLVQLSGAKTFSPHKEMDKKFSEALTLAHKKGVDIFCYDCNVGEDYIEIKDPVEIIL</sequence>
<accession>A0Q3Q9</accession>
<comment type="similarity">
    <text evidence="1">Belongs to the SfsA family.</text>
</comment>
<proteinExistence type="inferred from homology"/>
<protein>
    <recommendedName>
        <fullName evidence="1">Sugar fermentation stimulation protein homolog</fullName>
    </recommendedName>
</protein>
<dbReference type="EMBL" id="CP000382">
    <property type="protein sequence ID" value="ABK62655.1"/>
    <property type="molecule type" value="Genomic_DNA"/>
</dbReference>
<dbReference type="RefSeq" id="WP_011723234.1">
    <property type="nucleotide sequence ID" value="NC_008593.1"/>
</dbReference>
<dbReference type="SMR" id="A0Q3Q9"/>
<dbReference type="STRING" id="386415.NT01CX_0808"/>
<dbReference type="KEGG" id="cno:NT01CX_0808"/>
<dbReference type="eggNOG" id="COG1489">
    <property type="taxonomic scope" value="Bacteria"/>
</dbReference>
<dbReference type="HOGENOM" id="CLU_052299_1_0_9"/>
<dbReference type="Proteomes" id="UP000008220">
    <property type="component" value="Chromosome"/>
</dbReference>
<dbReference type="GO" id="GO:0003677">
    <property type="term" value="F:DNA binding"/>
    <property type="evidence" value="ECO:0007669"/>
    <property type="project" value="InterPro"/>
</dbReference>
<dbReference type="CDD" id="cd22359">
    <property type="entry name" value="SfsA-like_bacterial"/>
    <property type="match status" value="1"/>
</dbReference>
<dbReference type="FunFam" id="2.40.50.580:FF:000002">
    <property type="entry name" value="Sugar fermentation stimulation protein homolog"/>
    <property type="match status" value="1"/>
</dbReference>
<dbReference type="Gene3D" id="2.40.50.580">
    <property type="match status" value="1"/>
</dbReference>
<dbReference type="Gene3D" id="3.40.1350.60">
    <property type="match status" value="1"/>
</dbReference>
<dbReference type="HAMAP" id="MF_00095">
    <property type="entry name" value="SfsA"/>
    <property type="match status" value="1"/>
</dbReference>
<dbReference type="InterPro" id="IPR005224">
    <property type="entry name" value="SfsA"/>
</dbReference>
<dbReference type="InterPro" id="IPR040452">
    <property type="entry name" value="SfsA_C"/>
</dbReference>
<dbReference type="InterPro" id="IPR041465">
    <property type="entry name" value="SfsA_N"/>
</dbReference>
<dbReference type="NCBIfam" id="TIGR00230">
    <property type="entry name" value="sfsA"/>
    <property type="match status" value="1"/>
</dbReference>
<dbReference type="PANTHER" id="PTHR30545">
    <property type="entry name" value="SUGAR FERMENTATION STIMULATION PROTEIN A"/>
    <property type="match status" value="1"/>
</dbReference>
<dbReference type="PANTHER" id="PTHR30545:SF2">
    <property type="entry name" value="SUGAR FERMENTATION STIMULATION PROTEIN A"/>
    <property type="match status" value="1"/>
</dbReference>
<dbReference type="Pfam" id="PF03749">
    <property type="entry name" value="SfsA"/>
    <property type="match status" value="1"/>
</dbReference>
<dbReference type="Pfam" id="PF17746">
    <property type="entry name" value="SfsA_N"/>
    <property type="match status" value="1"/>
</dbReference>
<name>SFSA_CLONN</name>
<gene>
    <name evidence="1" type="primary">sfsA</name>
    <name type="ordered locus">NT01CX_0808</name>
</gene>
<keyword id="KW-1185">Reference proteome</keyword>
<reference key="1">
    <citation type="journal article" date="2006" name="Nat. Biotechnol.">
        <title>The genome and transcriptomes of the anti-tumor agent Clostridium novyi-NT.</title>
        <authorList>
            <person name="Bettegowda C."/>
            <person name="Huang X."/>
            <person name="Lin J."/>
            <person name="Cheong I."/>
            <person name="Kohli M."/>
            <person name="Szabo S.A."/>
            <person name="Zhang X."/>
            <person name="Diaz L.A. Jr."/>
            <person name="Velculescu V.E."/>
            <person name="Parmigiani G."/>
            <person name="Kinzler K.W."/>
            <person name="Vogelstein B."/>
            <person name="Zhou S."/>
        </authorList>
    </citation>
    <scope>NUCLEOTIDE SEQUENCE [LARGE SCALE GENOMIC DNA]</scope>
    <source>
        <strain>NT</strain>
    </source>
</reference>